<comment type="function">
    <text evidence="2 3">Component of the F(420)H(2) dehydrogenase (FPO complex) which is part of the energy-conserving F(420)H(2):heterodisulfide oxidoreductase system. The membrane-bound electron transfer system of the complex plays an important role in the metabolism of methylotrophic methanogens when the organisms grow on methanol or methylamines. Catalyzes the oxidation of methanophenazine to dihydromethanophenazine. It shuttles electrons from F(420)H(2), via FAD and iron-sulfur (Fe-S) centers, to methanophenazine (an electron carrier in the membrane). It couples the redox reaction to proton translocation (for every two electrons transferred, two hydrogen ions are translocated across the cytoplasmic membrane), and thus conserves the redox energy in a proton gradient. It also catalyzes the oxidation of F(420)H(2) with quinones such as 2,3-dimethyl-1,4-naphthoquinone, 2-methyl-1,4-naphthoquinone and tetramethyl-p-benzoquinone.</text>
</comment>
<comment type="catalytic activity">
    <reaction evidence="3">
        <text>methanophenazine + reduced coenzyme F420-(gamma-L-Glu)(n) = dihydromethanophenazine + oxidized coenzyme F420-(gamma-L-Glu)(n) + H(+)</text>
        <dbReference type="Rhea" id="RHEA:54752"/>
        <dbReference type="Rhea" id="RHEA-COMP:12939"/>
        <dbReference type="Rhea" id="RHEA-COMP:14378"/>
        <dbReference type="ChEBI" id="CHEBI:15378"/>
        <dbReference type="ChEBI" id="CHEBI:29118"/>
        <dbReference type="ChEBI" id="CHEBI:50375"/>
        <dbReference type="ChEBI" id="CHEBI:133980"/>
        <dbReference type="ChEBI" id="CHEBI:139511"/>
        <dbReference type="EC" id="1.5.98.3"/>
    </reaction>
</comment>
<comment type="biophysicochemical properties">
    <kinetics>
        <KM evidence="3">7 uM for F(420)H(2) (at 37 degrees Celsius and pH 7)</KM>
        <Vmax evidence="3">17.0 umol/min/mg enzyme (at 37 degrees Celsius and pH 7)</Vmax>
        <text>Measured for the whole complex.</text>
    </kinetics>
    <phDependence>
        <text evidence="3">Optimum pH is 8.5.</text>
    </phDependence>
    <temperatureDependence>
        <text evidence="3">Optimum temperature is 39 degrees Celsius.</text>
    </temperatureDependence>
</comment>
<comment type="subunit">
    <text evidence="2">The FPO complex is composed of at least 13 different subunits. FpoA, FpoH, FpoJ, FpoK, FpoL, FpoM and FpoN proteins constitute the membrane sector of the complex.</text>
</comment>
<comment type="subcellular location">
    <subcellularLocation>
        <location evidence="4">Cell membrane</location>
        <topology evidence="4">Multi-pass membrane protein</topology>
    </subcellularLocation>
</comment>
<comment type="similarity">
    <text evidence="4">Belongs to the complex I subunit 3 family.</text>
</comment>
<comment type="sequence caution" evidence="4">
    <conflict type="erroneous initiation">
        <sequence resource="EMBL-CDS" id="AAF65731"/>
    </conflict>
    <text>Truncated N-terminus.</text>
</comment>
<organism>
    <name type="scientific">Methanosarcina mazei (strain ATCC BAA-159 / DSM 3647 / Goe1 / Go1 / JCM 11833 / OCM 88)</name>
    <name type="common">Methanosarcina frisia</name>
    <dbReference type="NCBI Taxonomy" id="192952"/>
    <lineage>
        <taxon>Archaea</taxon>
        <taxon>Methanobacteriati</taxon>
        <taxon>Methanobacteriota</taxon>
        <taxon>Stenosarchaea group</taxon>
        <taxon>Methanomicrobia</taxon>
        <taxon>Methanosarcinales</taxon>
        <taxon>Methanosarcinaceae</taxon>
        <taxon>Methanosarcina</taxon>
    </lineage>
</organism>
<proteinExistence type="evidence at protein level"/>
<evidence type="ECO:0000255" key="1"/>
<evidence type="ECO:0000269" key="2">
    <source>
    </source>
</evidence>
<evidence type="ECO:0000269" key="3">
    <source ref="1"/>
</evidence>
<evidence type="ECO:0000305" key="4"/>
<dbReference type="EC" id="1.5.98.3" evidence="3"/>
<dbReference type="EMBL" id="AF228525">
    <property type="protein sequence ID" value="AAF65731.1"/>
    <property type="status" value="ALT_INIT"/>
    <property type="molecule type" value="Genomic_DNA"/>
</dbReference>
<dbReference type="EMBL" id="AE008384">
    <property type="protein sequence ID" value="AAM32187.1"/>
    <property type="molecule type" value="Genomic_DNA"/>
</dbReference>
<dbReference type="SMR" id="Q8PU58"/>
<dbReference type="TCDB" id="3.D.13.1.1">
    <property type="family name" value="the h+ extruding f420 dehydrogenase (fpo) complex family"/>
</dbReference>
<dbReference type="TCDB" id="3.D.9.1.1">
    <property type="family name" value="the h(+)-translocating f420h2 dehydrogenase (f420h2dh) family"/>
</dbReference>
<dbReference type="KEGG" id="mma:MM_2491"/>
<dbReference type="PATRIC" id="fig|192952.21.peg.2850"/>
<dbReference type="eggNOG" id="arCOG01557">
    <property type="taxonomic scope" value="Archaea"/>
</dbReference>
<dbReference type="HOGENOM" id="CLU_119549_0_2_2"/>
<dbReference type="BRENDA" id="1.12.98.3">
    <property type="organism ID" value="3270"/>
</dbReference>
<dbReference type="Proteomes" id="UP000000595">
    <property type="component" value="Chromosome"/>
</dbReference>
<dbReference type="GO" id="GO:0030964">
    <property type="term" value="C:NADH dehydrogenase complex"/>
    <property type="evidence" value="ECO:0007669"/>
    <property type="project" value="TreeGrafter"/>
</dbReference>
<dbReference type="GO" id="GO:0005886">
    <property type="term" value="C:plasma membrane"/>
    <property type="evidence" value="ECO:0007669"/>
    <property type="project" value="UniProtKB-SubCell"/>
</dbReference>
<dbReference type="GO" id="GO:0051911">
    <property type="term" value="F:Methanosarcina-phenazine hydrogenase activity"/>
    <property type="evidence" value="ECO:0000314"/>
    <property type="project" value="UniProtKB"/>
</dbReference>
<dbReference type="GO" id="GO:0008137">
    <property type="term" value="F:NADH dehydrogenase (ubiquinone) activity"/>
    <property type="evidence" value="ECO:0007669"/>
    <property type="project" value="InterPro"/>
</dbReference>
<dbReference type="GO" id="GO:0043738">
    <property type="term" value="F:reduced coenzyme F420 dehydrogenase activity"/>
    <property type="evidence" value="ECO:0007669"/>
    <property type="project" value="RHEA"/>
</dbReference>
<dbReference type="GO" id="GO:0015948">
    <property type="term" value="P:methanogenesis"/>
    <property type="evidence" value="ECO:0007669"/>
    <property type="project" value="UniProtKB-KW"/>
</dbReference>
<dbReference type="GO" id="GO:0015945">
    <property type="term" value="P:methanol metabolic process"/>
    <property type="evidence" value="ECO:0007669"/>
    <property type="project" value="UniProtKB-KW"/>
</dbReference>
<dbReference type="FunFam" id="1.20.58.1610:FF:000012">
    <property type="entry name" value="F(420)H(2) dehydrogenase subunit A"/>
    <property type="match status" value="1"/>
</dbReference>
<dbReference type="Gene3D" id="1.20.58.1610">
    <property type="entry name" value="NADH:ubiquinone/plastoquinone oxidoreductase, chain 3"/>
    <property type="match status" value="1"/>
</dbReference>
<dbReference type="HAMAP" id="MF_01394">
    <property type="entry name" value="NDH1_NuoA"/>
    <property type="match status" value="1"/>
</dbReference>
<dbReference type="InterPro" id="IPR023043">
    <property type="entry name" value="NAD(P)H_OxRDtase_bac/plastid"/>
</dbReference>
<dbReference type="InterPro" id="IPR000440">
    <property type="entry name" value="NADH_UbQ/plastoQ_OxRdtase_su3"/>
</dbReference>
<dbReference type="InterPro" id="IPR038430">
    <property type="entry name" value="NDAH_ubi_oxred_su3_sf"/>
</dbReference>
<dbReference type="PANTHER" id="PTHR11058">
    <property type="entry name" value="NADH-UBIQUINONE OXIDOREDUCTASE CHAIN 3"/>
    <property type="match status" value="1"/>
</dbReference>
<dbReference type="PANTHER" id="PTHR11058:SF9">
    <property type="entry name" value="NADH-UBIQUINONE OXIDOREDUCTASE CHAIN 3"/>
    <property type="match status" value="1"/>
</dbReference>
<dbReference type="Pfam" id="PF00507">
    <property type="entry name" value="Oxidored_q4"/>
    <property type="match status" value="1"/>
</dbReference>
<accession>Q8PU58</accession>
<accession>Q9P9G3</accession>
<gene>
    <name type="primary">fpoA</name>
    <name type="ordered locus">MM_2491</name>
</gene>
<sequence>MIGDTMSGIIDSYIPVAIFLAVGLIMPPMTMFMVKQLSPRSKAASKYTTYESGSVPTGTARIQFNVEYYLYAIAFVLFDIEVLFLYPWATVYKGHGITSIAVVEMFVFIFILLFGYVYLWKKEALTWVK</sequence>
<feature type="chain" id="PRO_0000423954" description="F(420)H(2) dehydrogenase subunit A">
    <location>
        <begin position="1"/>
        <end position="129"/>
    </location>
</feature>
<feature type="transmembrane region" description="Helical" evidence="1">
    <location>
        <begin position="9"/>
        <end position="29"/>
    </location>
</feature>
<feature type="transmembrane region" description="Helical" evidence="1">
    <location>
        <begin position="64"/>
        <end position="84"/>
    </location>
</feature>
<feature type="transmembrane region" description="Helical" evidence="1">
    <location>
        <begin position="95"/>
        <end position="115"/>
    </location>
</feature>
<name>FPOA_METMA</name>
<reference key="1">
    <citation type="journal article" date="1997" name="FEMS Microbiol. Lett.">
        <title>Purification and properties of an F420H2 dehydrogenase from Methanosarcina mazei Go1.</title>
        <authorList>
            <person name="Abken H.-J."/>
            <person name="Deppenmeier U."/>
        </authorList>
    </citation>
    <scope>NUCLEOTIDE SEQUENCE [GENOMIC DNA]</scope>
    <scope>FUNCTION</scope>
    <scope>CATALYTIC ACTIVITY</scope>
    <scope>BIOPHYSICOCHEMICAL PROPERTIES</scope>
    <scope>SUBSTRATE SPECIFICITY</scope>
    <scope>SUBCELLULAR LOCATION</scope>
    <source>
        <strain>ATCC BAA-159 / DSM 3647 / Goe1 / Go1 / JCM 11833 / OCM 88</strain>
    </source>
</reference>
<reference key="2">
    <citation type="journal article" date="2000" name="J. Biol. Chem.">
        <title>The F420H2 dehydrogenase from Methanosarcina mazei is a Redox-driven proton pump closely related to NADH dehydrogenases.</title>
        <authorList>
            <person name="Baumer S."/>
            <person name="Ide T."/>
            <person name="Jacobi C."/>
            <person name="Johann A."/>
            <person name="Gottschalk G."/>
            <person name="Deppenmeier U."/>
        </authorList>
    </citation>
    <scope>NUCLEOTIDE SEQUENCE [GENOMIC DNA]</scope>
    <scope>FUNCTION IN THE PROTON TRANSLOCATION</scope>
    <scope>SUBUNIT</scope>
    <scope>NOMENCLATURE</scope>
    <source>
        <strain>ATCC BAA-159 / DSM 3647 / Goe1 / Go1 / JCM 11833 / OCM 88</strain>
    </source>
</reference>
<reference key="3">
    <citation type="journal article" date="2002" name="J. Mol. Microbiol. Biotechnol.">
        <title>The genome of Methanosarcina mazei: evidence for lateral gene transfer between Bacteria and Archaea.</title>
        <authorList>
            <person name="Deppenmeier U."/>
            <person name="Johann A."/>
            <person name="Hartsch T."/>
            <person name="Merkl R."/>
            <person name="Schmitz R.A."/>
            <person name="Martinez-Arias R."/>
            <person name="Henne A."/>
            <person name="Wiezer A."/>
            <person name="Baeumer S."/>
            <person name="Jacobi C."/>
            <person name="Brueggemann H."/>
            <person name="Lienard T."/>
            <person name="Christmann A."/>
            <person name="Boemecke M."/>
            <person name="Steckel S."/>
            <person name="Bhattacharyya A."/>
            <person name="Lykidis A."/>
            <person name="Overbeek R."/>
            <person name="Klenk H.-P."/>
            <person name="Gunsalus R.P."/>
            <person name="Fritz H.-J."/>
            <person name="Gottschalk G."/>
        </authorList>
    </citation>
    <scope>NUCLEOTIDE SEQUENCE [LARGE SCALE GENOMIC DNA]</scope>
    <source>
        <strain>ATCC BAA-159 / DSM 3647 / Goe1 / Go1 / JCM 11833 / OCM 88</strain>
    </source>
</reference>
<protein>
    <recommendedName>
        <fullName>F(420)H(2) dehydrogenase subunit A</fullName>
        <ecNumber evidence="3">1.5.98.3</ecNumber>
    </recommendedName>
    <alternativeName>
        <fullName>F(420)H(2)-dependent phenazine dehydrogenase subunit A</fullName>
    </alternativeName>
    <alternativeName>
        <fullName>F(420)H(2)-dependent phenazine oxidoreductase subunit A</fullName>
        <shortName>FPO subunit A</shortName>
    </alternativeName>
    <alternativeName>
        <fullName>Methanophenazine hydrogenase subunit A</fullName>
    </alternativeName>
    <alternativeName>
        <fullName>Methanosarcina-phenazine hydrogenase subunit A</fullName>
    </alternativeName>
</protein>
<keyword id="KW-1003">Cell membrane</keyword>
<keyword id="KW-0249">Electron transport</keyword>
<keyword id="KW-0472">Membrane</keyword>
<keyword id="KW-0484">Methanogenesis</keyword>
<keyword id="KW-0485">Methanol utilization</keyword>
<keyword id="KW-0560">Oxidoreductase</keyword>
<keyword id="KW-0812">Transmembrane</keyword>
<keyword id="KW-1133">Transmembrane helix</keyword>
<keyword id="KW-0813">Transport</keyword>